<proteinExistence type="inferred from homology"/>
<protein>
    <recommendedName>
        <fullName evidence="1">Glutamate-1-semialdehyde 2,1-aminomutase</fullName>
        <shortName evidence="1">GSA</shortName>
        <ecNumber evidence="1">5.4.3.8</ecNumber>
    </recommendedName>
    <alternativeName>
        <fullName evidence="1">Glutamate-1-semialdehyde aminotransferase</fullName>
        <shortName evidence="1">GSA-AT</shortName>
    </alternativeName>
</protein>
<accession>B1Y8G2</accession>
<organism>
    <name type="scientific">Leptothrix cholodnii (strain ATCC 51168 / LMG 8142 / SP-6)</name>
    <name type="common">Leptothrix discophora (strain SP-6)</name>
    <dbReference type="NCBI Taxonomy" id="395495"/>
    <lineage>
        <taxon>Bacteria</taxon>
        <taxon>Pseudomonadati</taxon>
        <taxon>Pseudomonadota</taxon>
        <taxon>Betaproteobacteria</taxon>
        <taxon>Burkholderiales</taxon>
        <taxon>Sphaerotilaceae</taxon>
        <taxon>Leptothrix</taxon>
    </lineage>
</organism>
<sequence>MATPVSSNAELFERAQRSIPGGVNSPVRAFRAVGGTPRFIARAQGAYMWDAEGKQYIDYIGSWGPMILGHGHPAVLAAVQKAATEGFSFGAPTEREVELAETILALVPSCEQIRLVSSGTEAAMSAIRLARGATGRSKLIKFEGCYHGHADALLVKAGSGLATFGNPTSAGVPPEVVQHTLVLTYNDIEQLEEAFKIHGPELACVMIEPIAGNMNFVRATVPFMKRIRELCTQHGALLVFDEVMCGFRVALGSAQSLYAQAIPGFAPDVSVFGKVIGGGMPLAAFGASRKIMSLLAPLGPVYQAGTLSGNPVATACGLATLREISQPGFFEALGARTRRLVDGLSAAAADAGVPFVGDCQGGMFGFFFPRNRGEGLPQNYATVMATDQARFNSFFHGLLDRGVYLAPALYEAGFVSAAHSDADIDATVAAARAALQP</sequence>
<keyword id="KW-0963">Cytoplasm</keyword>
<keyword id="KW-0413">Isomerase</keyword>
<keyword id="KW-0627">Porphyrin biosynthesis</keyword>
<keyword id="KW-0663">Pyridoxal phosphate</keyword>
<keyword id="KW-1185">Reference proteome</keyword>
<reference key="1">
    <citation type="submission" date="2008-03" db="EMBL/GenBank/DDBJ databases">
        <title>Complete sequence of Leptothrix cholodnii SP-6.</title>
        <authorList>
            <consortium name="US DOE Joint Genome Institute"/>
            <person name="Copeland A."/>
            <person name="Lucas S."/>
            <person name="Lapidus A."/>
            <person name="Glavina del Rio T."/>
            <person name="Dalin E."/>
            <person name="Tice H."/>
            <person name="Bruce D."/>
            <person name="Goodwin L."/>
            <person name="Pitluck S."/>
            <person name="Chertkov O."/>
            <person name="Brettin T."/>
            <person name="Detter J.C."/>
            <person name="Han C."/>
            <person name="Kuske C.R."/>
            <person name="Schmutz J."/>
            <person name="Larimer F."/>
            <person name="Land M."/>
            <person name="Hauser L."/>
            <person name="Kyrpides N."/>
            <person name="Lykidis A."/>
            <person name="Emerson D."/>
            <person name="Richardson P."/>
        </authorList>
    </citation>
    <scope>NUCLEOTIDE SEQUENCE [LARGE SCALE GENOMIC DNA]</scope>
    <source>
        <strain>ATCC 51168 / LMG 8142 / SP-6</strain>
    </source>
</reference>
<feature type="chain" id="PRO_1000121900" description="Glutamate-1-semialdehyde 2,1-aminomutase">
    <location>
        <begin position="1"/>
        <end position="437"/>
    </location>
</feature>
<feature type="modified residue" description="N6-(pyridoxal phosphate)lysine" evidence="1">
    <location>
        <position position="274"/>
    </location>
</feature>
<evidence type="ECO:0000255" key="1">
    <source>
        <dbReference type="HAMAP-Rule" id="MF_00375"/>
    </source>
</evidence>
<name>GSA_LEPCP</name>
<comment type="catalytic activity">
    <reaction evidence="1">
        <text>(S)-4-amino-5-oxopentanoate = 5-aminolevulinate</text>
        <dbReference type="Rhea" id="RHEA:14265"/>
        <dbReference type="ChEBI" id="CHEBI:57501"/>
        <dbReference type="ChEBI" id="CHEBI:356416"/>
        <dbReference type="EC" id="5.4.3.8"/>
    </reaction>
</comment>
<comment type="cofactor">
    <cofactor evidence="1">
        <name>pyridoxal 5'-phosphate</name>
        <dbReference type="ChEBI" id="CHEBI:597326"/>
    </cofactor>
</comment>
<comment type="pathway">
    <text evidence="1">Porphyrin-containing compound metabolism; protoporphyrin-IX biosynthesis; 5-aminolevulinate from L-glutamyl-tRNA(Glu): step 2/2.</text>
</comment>
<comment type="subunit">
    <text evidence="1">Homodimer.</text>
</comment>
<comment type="subcellular location">
    <subcellularLocation>
        <location evidence="1">Cytoplasm</location>
    </subcellularLocation>
</comment>
<comment type="similarity">
    <text evidence="1">Belongs to the class-III pyridoxal-phosphate-dependent aminotransferase family. HemL subfamily.</text>
</comment>
<dbReference type="EC" id="5.4.3.8" evidence="1"/>
<dbReference type="EMBL" id="CP001013">
    <property type="protein sequence ID" value="ACB36228.1"/>
    <property type="molecule type" value="Genomic_DNA"/>
</dbReference>
<dbReference type="RefSeq" id="WP_012348973.1">
    <property type="nucleotide sequence ID" value="NC_010524.1"/>
</dbReference>
<dbReference type="SMR" id="B1Y8G2"/>
<dbReference type="STRING" id="395495.Lcho_3974"/>
<dbReference type="KEGG" id="lch:Lcho_3974"/>
<dbReference type="eggNOG" id="COG0001">
    <property type="taxonomic scope" value="Bacteria"/>
</dbReference>
<dbReference type="HOGENOM" id="CLU_016922_1_5_4"/>
<dbReference type="OrthoDB" id="3398487at2"/>
<dbReference type="UniPathway" id="UPA00251">
    <property type="reaction ID" value="UER00317"/>
</dbReference>
<dbReference type="Proteomes" id="UP000001693">
    <property type="component" value="Chromosome"/>
</dbReference>
<dbReference type="GO" id="GO:0005737">
    <property type="term" value="C:cytoplasm"/>
    <property type="evidence" value="ECO:0007669"/>
    <property type="project" value="UniProtKB-SubCell"/>
</dbReference>
<dbReference type="GO" id="GO:0042286">
    <property type="term" value="F:glutamate-1-semialdehyde 2,1-aminomutase activity"/>
    <property type="evidence" value="ECO:0007669"/>
    <property type="project" value="UniProtKB-UniRule"/>
</dbReference>
<dbReference type="GO" id="GO:0030170">
    <property type="term" value="F:pyridoxal phosphate binding"/>
    <property type="evidence" value="ECO:0007669"/>
    <property type="project" value="InterPro"/>
</dbReference>
<dbReference type="GO" id="GO:0008483">
    <property type="term" value="F:transaminase activity"/>
    <property type="evidence" value="ECO:0007669"/>
    <property type="project" value="InterPro"/>
</dbReference>
<dbReference type="GO" id="GO:0006782">
    <property type="term" value="P:protoporphyrinogen IX biosynthetic process"/>
    <property type="evidence" value="ECO:0007669"/>
    <property type="project" value="UniProtKB-UniRule"/>
</dbReference>
<dbReference type="CDD" id="cd00610">
    <property type="entry name" value="OAT_like"/>
    <property type="match status" value="1"/>
</dbReference>
<dbReference type="FunFam" id="3.40.640.10:FF:000021">
    <property type="entry name" value="Glutamate-1-semialdehyde 2,1-aminomutase"/>
    <property type="match status" value="1"/>
</dbReference>
<dbReference type="Gene3D" id="3.90.1150.10">
    <property type="entry name" value="Aspartate Aminotransferase, domain 1"/>
    <property type="match status" value="1"/>
</dbReference>
<dbReference type="Gene3D" id="3.40.640.10">
    <property type="entry name" value="Type I PLP-dependent aspartate aminotransferase-like (Major domain)"/>
    <property type="match status" value="1"/>
</dbReference>
<dbReference type="HAMAP" id="MF_00375">
    <property type="entry name" value="HemL_aminotrans_3"/>
    <property type="match status" value="1"/>
</dbReference>
<dbReference type="InterPro" id="IPR004639">
    <property type="entry name" value="4pyrrol_synth_GluAld_NH2Trfase"/>
</dbReference>
<dbReference type="InterPro" id="IPR005814">
    <property type="entry name" value="Aminotrans_3"/>
</dbReference>
<dbReference type="InterPro" id="IPR015424">
    <property type="entry name" value="PyrdxlP-dep_Trfase"/>
</dbReference>
<dbReference type="InterPro" id="IPR015421">
    <property type="entry name" value="PyrdxlP-dep_Trfase_major"/>
</dbReference>
<dbReference type="InterPro" id="IPR015422">
    <property type="entry name" value="PyrdxlP-dep_Trfase_small"/>
</dbReference>
<dbReference type="NCBIfam" id="TIGR00713">
    <property type="entry name" value="hemL"/>
    <property type="match status" value="1"/>
</dbReference>
<dbReference type="NCBIfam" id="NF000818">
    <property type="entry name" value="PRK00062.1"/>
    <property type="match status" value="1"/>
</dbReference>
<dbReference type="PANTHER" id="PTHR43713">
    <property type="entry name" value="GLUTAMATE-1-SEMIALDEHYDE 2,1-AMINOMUTASE"/>
    <property type="match status" value="1"/>
</dbReference>
<dbReference type="PANTHER" id="PTHR43713:SF3">
    <property type="entry name" value="GLUTAMATE-1-SEMIALDEHYDE 2,1-AMINOMUTASE 1, CHLOROPLASTIC-RELATED"/>
    <property type="match status" value="1"/>
</dbReference>
<dbReference type="Pfam" id="PF00202">
    <property type="entry name" value="Aminotran_3"/>
    <property type="match status" value="1"/>
</dbReference>
<dbReference type="SUPFAM" id="SSF53383">
    <property type="entry name" value="PLP-dependent transferases"/>
    <property type="match status" value="1"/>
</dbReference>
<gene>
    <name evidence="1" type="primary">hemL</name>
    <name type="ordered locus">Lcho_3974</name>
</gene>